<accession>Q6D7F2</accession>
<protein>
    <recommendedName>
        <fullName evidence="1">Tol-Pal system protein TolB</fullName>
    </recommendedName>
</protein>
<sequence length="430" mass="45857">MKQVLKVAVSFLMLWAAVLHAEVRIEITQGVDSARPIGVVPFKWAGPGAAPEDVGAIVGADLRNSGKFNPIDANRMPQQPATASEVTPAAWTALGIDAVVVGQVQPSADGSYLVSYQLVDTSGNPGNVLAQNQFKVTKQWLRYAAHTASDEVFEKLSGIKGAFRTRIAYVVQTNGGQFPYELRVADYDGYNQFVVHRSPQPLMSPAWSADGSKLAYVTFESGRSALVIQTLANGAIRQVASFPRHNGAPSFSPDGSKLAFALSKSGSLNLYVMNLGSGQISPVTDGRSNNTEPTWFPDSQTLAYTSDQAGRPQVYKVNANGGAPQRVTWEGSQNQDSDVSADGKFLVTVSSNGGAQHISKLDLVTGAVQVLTDTFLDETPSIAPNGTMVIYSSKQGLGSVLQLVSTDGRFKARLPATDGQVKFPAWSPYL</sequence>
<gene>
    <name evidence="1" type="primary">tolB</name>
    <name type="ordered locus">ECA1373</name>
</gene>
<reference key="1">
    <citation type="journal article" date="2004" name="Proc. Natl. Acad. Sci. U.S.A.">
        <title>Genome sequence of the enterobacterial phytopathogen Erwinia carotovora subsp. atroseptica and characterization of virulence factors.</title>
        <authorList>
            <person name="Bell K.S."/>
            <person name="Sebaihia M."/>
            <person name="Pritchard L."/>
            <person name="Holden M.T.G."/>
            <person name="Hyman L.J."/>
            <person name="Holeva M.C."/>
            <person name="Thomson N.R."/>
            <person name="Bentley S.D."/>
            <person name="Churcher L.J.C."/>
            <person name="Mungall K."/>
            <person name="Atkin R."/>
            <person name="Bason N."/>
            <person name="Brooks K."/>
            <person name="Chillingworth T."/>
            <person name="Clark K."/>
            <person name="Doggett J."/>
            <person name="Fraser A."/>
            <person name="Hance Z."/>
            <person name="Hauser H."/>
            <person name="Jagels K."/>
            <person name="Moule S."/>
            <person name="Norbertczak H."/>
            <person name="Ormond D."/>
            <person name="Price C."/>
            <person name="Quail M.A."/>
            <person name="Sanders M."/>
            <person name="Walker D."/>
            <person name="Whitehead S."/>
            <person name="Salmond G.P.C."/>
            <person name="Birch P.R.J."/>
            <person name="Parkhill J."/>
            <person name="Toth I.K."/>
        </authorList>
    </citation>
    <scope>NUCLEOTIDE SEQUENCE [LARGE SCALE GENOMIC DNA]</scope>
    <source>
        <strain>SCRI 1043 / ATCC BAA-672</strain>
    </source>
</reference>
<organism>
    <name type="scientific">Pectobacterium atrosepticum (strain SCRI 1043 / ATCC BAA-672)</name>
    <name type="common">Erwinia carotovora subsp. atroseptica</name>
    <dbReference type="NCBI Taxonomy" id="218491"/>
    <lineage>
        <taxon>Bacteria</taxon>
        <taxon>Pseudomonadati</taxon>
        <taxon>Pseudomonadota</taxon>
        <taxon>Gammaproteobacteria</taxon>
        <taxon>Enterobacterales</taxon>
        <taxon>Pectobacteriaceae</taxon>
        <taxon>Pectobacterium</taxon>
    </lineage>
</organism>
<feature type="signal peptide" evidence="1">
    <location>
        <begin position="1"/>
        <end position="21"/>
    </location>
</feature>
<feature type="chain" id="PRO_0000034651" description="Tol-Pal system protein TolB" evidence="1">
    <location>
        <begin position="22"/>
        <end position="430"/>
    </location>
</feature>
<keyword id="KW-0131">Cell cycle</keyword>
<keyword id="KW-0132">Cell division</keyword>
<keyword id="KW-0574">Periplasm</keyword>
<keyword id="KW-1185">Reference proteome</keyword>
<keyword id="KW-0732">Signal</keyword>
<proteinExistence type="inferred from homology"/>
<evidence type="ECO:0000255" key="1">
    <source>
        <dbReference type="HAMAP-Rule" id="MF_00671"/>
    </source>
</evidence>
<comment type="function">
    <text evidence="1">Part of the Tol-Pal system, which plays a role in outer membrane invagination during cell division and is important for maintaining outer membrane integrity. TolB occupies a key intermediary position in the Tol-Pal system because it communicates directly with both membrane-embedded components, Pal in the outer membrane and TolA in the inner membrane.</text>
</comment>
<comment type="subunit">
    <text evidence="1">The Tol-Pal system is composed of five core proteins: the inner membrane proteins TolA, TolQ and TolR, the periplasmic protein TolB and the outer membrane protein Pal. They form a network linking the inner and outer membranes and the peptidoglycan layer.</text>
</comment>
<comment type="subcellular location">
    <subcellularLocation>
        <location evidence="1">Periplasm</location>
    </subcellularLocation>
</comment>
<comment type="similarity">
    <text evidence="1">Belongs to the TolB family.</text>
</comment>
<name>TOLB_PECAS</name>
<dbReference type="EMBL" id="BX950851">
    <property type="protein sequence ID" value="CAG74283.1"/>
    <property type="molecule type" value="Genomic_DNA"/>
</dbReference>
<dbReference type="RefSeq" id="WP_011092958.1">
    <property type="nucleotide sequence ID" value="NC_004547.2"/>
</dbReference>
<dbReference type="SMR" id="Q6D7F2"/>
<dbReference type="STRING" id="218491.ECA1373"/>
<dbReference type="GeneID" id="57208186"/>
<dbReference type="KEGG" id="eca:ECA1373"/>
<dbReference type="PATRIC" id="fig|218491.5.peg.1407"/>
<dbReference type="eggNOG" id="COG0823">
    <property type="taxonomic scope" value="Bacteria"/>
</dbReference>
<dbReference type="HOGENOM" id="CLU_047123_0_0_6"/>
<dbReference type="OrthoDB" id="9802240at2"/>
<dbReference type="Proteomes" id="UP000007966">
    <property type="component" value="Chromosome"/>
</dbReference>
<dbReference type="GO" id="GO:0042597">
    <property type="term" value="C:periplasmic space"/>
    <property type="evidence" value="ECO:0007669"/>
    <property type="project" value="UniProtKB-SubCell"/>
</dbReference>
<dbReference type="GO" id="GO:0051301">
    <property type="term" value="P:cell division"/>
    <property type="evidence" value="ECO:0007669"/>
    <property type="project" value="UniProtKB-UniRule"/>
</dbReference>
<dbReference type="GO" id="GO:0017038">
    <property type="term" value="P:protein import"/>
    <property type="evidence" value="ECO:0007669"/>
    <property type="project" value="InterPro"/>
</dbReference>
<dbReference type="FunFam" id="2.120.10.30:FF:000022">
    <property type="entry name" value="Tol-Pal system protein TolB"/>
    <property type="match status" value="1"/>
</dbReference>
<dbReference type="Gene3D" id="2.120.10.30">
    <property type="entry name" value="TolB, C-terminal domain"/>
    <property type="match status" value="1"/>
</dbReference>
<dbReference type="Gene3D" id="3.40.50.10070">
    <property type="entry name" value="TolB, N-terminal domain"/>
    <property type="match status" value="1"/>
</dbReference>
<dbReference type="HAMAP" id="MF_00671">
    <property type="entry name" value="TolB"/>
    <property type="match status" value="1"/>
</dbReference>
<dbReference type="InterPro" id="IPR011042">
    <property type="entry name" value="6-blade_b-propeller_TolB-like"/>
</dbReference>
<dbReference type="InterPro" id="IPR011659">
    <property type="entry name" value="PD40"/>
</dbReference>
<dbReference type="InterPro" id="IPR014167">
    <property type="entry name" value="Tol-Pal_TolB"/>
</dbReference>
<dbReference type="InterPro" id="IPR007195">
    <property type="entry name" value="TolB_N"/>
</dbReference>
<dbReference type="NCBIfam" id="TIGR02800">
    <property type="entry name" value="propeller_TolB"/>
    <property type="match status" value="1"/>
</dbReference>
<dbReference type="PANTHER" id="PTHR36842:SF1">
    <property type="entry name" value="PROTEIN TOLB"/>
    <property type="match status" value="1"/>
</dbReference>
<dbReference type="PANTHER" id="PTHR36842">
    <property type="entry name" value="PROTEIN TOLB HOMOLOG"/>
    <property type="match status" value="1"/>
</dbReference>
<dbReference type="Pfam" id="PF07676">
    <property type="entry name" value="PD40"/>
    <property type="match status" value="4"/>
</dbReference>
<dbReference type="Pfam" id="PF04052">
    <property type="entry name" value="TolB_N"/>
    <property type="match status" value="1"/>
</dbReference>
<dbReference type="SUPFAM" id="SSF52964">
    <property type="entry name" value="TolB, N-terminal domain"/>
    <property type="match status" value="1"/>
</dbReference>
<dbReference type="SUPFAM" id="SSF69304">
    <property type="entry name" value="Tricorn protease N-terminal domain"/>
    <property type="match status" value="1"/>
</dbReference>